<name>BMPA2_BORGP</name>
<keyword id="KW-0997">Cell inner membrane</keyword>
<keyword id="KW-1003">Cell membrane</keyword>
<keyword id="KW-0449">Lipoprotein</keyword>
<keyword id="KW-0472">Membrane</keyword>
<keyword id="KW-0564">Palmitate</keyword>
<keyword id="KW-0732">Signal</keyword>
<keyword id="KW-0813">Transport</keyword>
<organism>
    <name type="scientific">Borrelia garinii subsp. bavariensis (strain ATCC BAA-2496 / DSM 23469 / PBi)</name>
    <name type="common">Borreliella bavariensis</name>
    <dbReference type="NCBI Taxonomy" id="290434"/>
    <lineage>
        <taxon>Bacteria</taxon>
        <taxon>Pseudomonadati</taxon>
        <taxon>Spirochaetota</taxon>
        <taxon>Spirochaetia</taxon>
        <taxon>Spirochaetales</taxon>
        <taxon>Borreliaceae</taxon>
        <taxon>Borreliella</taxon>
    </lineage>
</organism>
<feature type="signal peptide" evidence="5">
    <location>
        <begin position="1"/>
        <end position="17"/>
    </location>
</feature>
<feature type="chain" id="PRO_0000017999" description="Basic membrane protein A2">
    <location>
        <begin position="18"/>
        <end position="337"/>
    </location>
</feature>
<feature type="lipid moiety-binding region" description="N-palmitoyl cysteine" evidence="5">
    <location>
        <position position="18"/>
    </location>
</feature>
<feature type="lipid moiety-binding region" description="S-diacylglycerol cysteine" evidence="5">
    <location>
        <position position="18"/>
    </location>
</feature>
<feature type="sequence variant" description="In strain: PLi.">
    <original>G</original>
    <variation>D</variation>
    <location>
        <position position="22"/>
    </location>
</feature>
<feature type="sequence variant" description="In strain: PLi.">
    <original>S</original>
    <variation>N</variation>
    <location>
        <position position="26"/>
    </location>
</feature>
<feature type="sequence variant" description="In strain: PLi.">
    <original>P</original>
    <variation>S</variation>
    <location>
        <position position="107"/>
    </location>
</feature>
<feature type="sequence variant" description="In strain: PLi.">
    <original>T</original>
    <variation>A</variation>
    <location>
        <position position="125"/>
    </location>
</feature>
<feature type="sequence variant" description="In strain: PLi.">
    <original>N</original>
    <variation>D</variation>
    <location>
        <position position="194"/>
    </location>
</feature>
<feature type="sequence variant" description="In strain: PLi.">
    <original>S</original>
    <variation>G</variation>
    <location>
        <position position="219"/>
    </location>
</feature>
<feature type="sequence variant" description="In strain: PLi.">
    <original>I</original>
    <variation>V</variation>
    <location>
        <position position="253"/>
    </location>
</feature>
<feature type="sequence variant" description="In strain: PLi.">
    <original>A</original>
    <variation>S</variation>
    <location>
        <position position="257"/>
    </location>
</feature>
<feature type="sequence variant" description="In strain: PLi.">
    <original>S</original>
    <variation>A</variation>
    <location>
        <position position="264"/>
    </location>
</feature>
<feature type="sequence variant" description="In strain: PLi.">
    <original>N</original>
    <variation>S</variation>
    <location>
        <position position="271"/>
    </location>
</feature>
<feature type="sequence conflict" description="In Ref. 2; CAA65883/CAA65877." evidence="5" ref="2">
    <original>E</original>
    <variation>EFI</variation>
    <location>
        <position position="337"/>
    </location>
</feature>
<proteinExistence type="inferred from homology"/>
<sequence length="337" mass="36878">MNKLLLLILFECIIFLSCSGKGSLESGIPKVSVIVNGTFDDKSFNESALNGIKKVKEEFKIELVLKESSTNSYLSDLEGLKDAGSNLIWLIGYRFSDVAKAVSLQNPEIKYAIIDPVYSEEPIPTNLVGMTFRAQEGAFLTGYIAAKVSKTGKIGFLGGIEGEIVDAFRYGYEAGAKYANKDIKISAHYIGSFNDVEAGRSVATKMYSDGIDIIHHAASLGGIGAIEVAKELGSGHYIIGVDEDQSYLAPNNIITSATKDVGRSLNIFTSNYLKTNTFEGGRLINYGLKEGVVGFVKNPKMIPFELEKEIDNLSSKIINQEIIVPYNKESYEKFLKE</sequence>
<evidence type="ECO:0000250" key="1">
    <source>
        <dbReference type="UniProtKB" id="P0CL55"/>
    </source>
</evidence>
<evidence type="ECO:0000250" key="2">
    <source>
        <dbReference type="UniProtKB" id="Q45010"/>
    </source>
</evidence>
<evidence type="ECO:0000269" key="3">
    <source>
    </source>
</evidence>
<evidence type="ECO:0000303" key="4">
    <source>
    </source>
</evidence>
<evidence type="ECO:0000305" key="5"/>
<reference key="1">
    <citation type="journal article" date="2004" name="Nucleic Acids Res.">
        <title>Comparative analysis of the Borrelia garinii genome.</title>
        <authorList>
            <person name="Gloeckner G."/>
            <person name="Lehmann R."/>
            <person name="Romualdi A."/>
            <person name="Pradella S."/>
            <person name="Schulte-Spechtel U."/>
            <person name="Schilhabel M."/>
            <person name="Wilske B."/>
            <person name="Suehnel J."/>
            <person name="Platzer M."/>
        </authorList>
    </citation>
    <scope>NUCLEOTIDE SEQUENCE [LARGE SCALE GENOMIC DNA]</scope>
    <source>
        <strain>ATCC BAA-2496 / DSM 23469 / PBi</strain>
    </source>
</reference>
<reference key="2">
    <citation type="journal article" date="1997" name="J. Clin. Microbiol.">
        <title>Heterogeneity of BmpA (P39) among European isolates of Borrelia burgdorferi sensu lato and influence of interspecies variability on serodiagnosis.</title>
        <authorList>
            <person name="Roessler D."/>
            <person name="Hauser U."/>
            <person name="Wilske B."/>
        </authorList>
    </citation>
    <scope>NUCLEOTIDE SEQUENCE [GENOMIC DNA] OF 15-337</scope>
    <source>
        <strain>ATCC BAA-2496 / DSM 23469 / PBi</strain>
        <strain>PLi</strain>
    </source>
</reference>
<gene>
    <name type="primary">bmpA2</name>
    <name type="synonym">bmpA</name>
    <name type="synonym">bmpA-2</name>
    <name type="ordered locus">BG0384</name>
</gene>
<dbReference type="EMBL" id="CP000013">
    <property type="protein sequence ID" value="AAU07236.1"/>
    <property type="molecule type" value="Genomic_DNA"/>
</dbReference>
<dbReference type="EMBL" id="X97244">
    <property type="protein sequence ID" value="CAA65883.1"/>
    <property type="molecule type" value="Genomic_DNA"/>
</dbReference>
<dbReference type="EMBL" id="X97238">
    <property type="protein sequence ID" value="CAA65877.1"/>
    <property type="molecule type" value="Genomic_DNA"/>
</dbReference>
<dbReference type="RefSeq" id="WP_011193710.1">
    <property type="nucleotide sequence ID" value="NZ_CP028872.1"/>
</dbReference>
<dbReference type="SMR" id="O31357"/>
<dbReference type="GeneID" id="45161171"/>
<dbReference type="KEGG" id="bga:BG0384"/>
<dbReference type="eggNOG" id="COG1744">
    <property type="taxonomic scope" value="Bacteria"/>
</dbReference>
<dbReference type="HOGENOM" id="CLU_038813_0_2_12"/>
<dbReference type="OrthoDB" id="9769871at2"/>
<dbReference type="Proteomes" id="UP000002276">
    <property type="component" value="Chromosome"/>
</dbReference>
<dbReference type="GO" id="GO:0005886">
    <property type="term" value="C:plasma membrane"/>
    <property type="evidence" value="ECO:0007669"/>
    <property type="project" value="UniProtKB-SubCell"/>
</dbReference>
<dbReference type="CDD" id="cd06354">
    <property type="entry name" value="PBP1_PrnA-like"/>
    <property type="match status" value="1"/>
</dbReference>
<dbReference type="Gene3D" id="3.40.50.2300">
    <property type="match status" value="2"/>
</dbReference>
<dbReference type="InterPro" id="IPR050957">
    <property type="entry name" value="BMP_lipoprotein"/>
</dbReference>
<dbReference type="InterPro" id="IPR028082">
    <property type="entry name" value="Peripla_BP_I"/>
</dbReference>
<dbReference type="InterPro" id="IPR003760">
    <property type="entry name" value="PnrA-like"/>
</dbReference>
<dbReference type="PANTHER" id="PTHR34296:SF2">
    <property type="entry name" value="ABC TRANSPORTER GUANOSINE-BINDING PROTEIN NUPN"/>
    <property type="match status" value="1"/>
</dbReference>
<dbReference type="PANTHER" id="PTHR34296">
    <property type="entry name" value="TRANSCRIPTIONAL ACTIVATOR PROTEIN MED"/>
    <property type="match status" value="1"/>
</dbReference>
<dbReference type="Pfam" id="PF02608">
    <property type="entry name" value="Bmp"/>
    <property type="match status" value="1"/>
</dbReference>
<dbReference type="SUPFAM" id="SSF53822">
    <property type="entry name" value="Periplasmic binding protein-like I"/>
    <property type="match status" value="1"/>
</dbReference>
<accession>O31357</accession>
<accession>O31360</accession>
<accession>Q661N5</accession>
<comment type="function">
    <text evidence="2 3">Immunogenic protein (PubMed:9350727). May be part of an ABC-type nucleoside uptake system involved in the purine salvage pathway.</text>
</comment>
<comment type="subunit">
    <text evidence="1">Monomer.</text>
</comment>
<comment type="subcellular location">
    <subcellularLocation>
        <location evidence="5">Cell inner membrane</location>
        <topology evidence="5">Lipid-anchor</topology>
    </subcellularLocation>
</comment>
<comment type="similarity">
    <text evidence="5">Belongs to the BMP lipoprotein family.</text>
</comment>
<protein>
    <recommendedName>
        <fullName>Basic membrane protein A2</fullName>
    </recommendedName>
    <alternativeName>
        <fullName evidence="4">Immunodominant antigen P39</fullName>
    </alternativeName>
    <alternativeName>
        <fullName evidence="2">Probable substrate-binding protein BmpA2</fullName>
    </alternativeName>
</protein>